<organism>
    <name type="scientific">Rickettsia bellii (strain RML369-C)</name>
    <dbReference type="NCBI Taxonomy" id="336407"/>
    <lineage>
        <taxon>Bacteria</taxon>
        <taxon>Pseudomonadati</taxon>
        <taxon>Pseudomonadota</taxon>
        <taxon>Alphaproteobacteria</taxon>
        <taxon>Rickettsiales</taxon>
        <taxon>Rickettsiaceae</taxon>
        <taxon>Rickettsieae</taxon>
        <taxon>Rickettsia</taxon>
        <taxon>belli group</taxon>
    </lineage>
</organism>
<proteinExistence type="inferred from homology"/>
<gene>
    <name evidence="1" type="primary">mraY</name>
    <name type="ordered locus">RBE_0854</name>
</gene>
<reference key="1">
    <citation type="journal article" date="2006" name="PLoS Genet.">
        <title>Genome sequence of Rickettsia bellii illuminates the role of amoebae in gene exchanges between intracellular pathogens.</title>
        <authorList>
            <person name="Ogata H."/>
            <person name="La Scola B."/>
            <person name="Audic S."/>
            <person name="Renesto P."/>
            <person name="Blanc G."/>
            <person name="Robert C."/>
            <person name="Fournier P.-E."/>
            <person name="Claverie J.-M."/>
            <person name="Raoult D."/>
        </authorList>
    </citation>
    <scope>NUCLEOTIDE SEQUENCE [LARGE SCALE GENOMIC DNA]</scope>
    <source>
        <strain>RML369-C</strain>
    </source>
</reference>
<sequence>MLYNLLLPYIHNSHIANLFHYITFRSGLAVLVTLSLSFLIGPRLIKFLQTLQKYGQPIRLDGPESHQAKAGTPTMGGIMIILSSCFSTLLLADLTNKYIWITLFGFVSFGIIGFLDDYAKVTKNNHYGVKGKSKLLLQGIISLIVCILLEYTIDSPSHMLNVPFFKSLSMDLGYLYIFFAIFVIVGASNAVNLTDGLDGLATVPIALTAGSFALISYLVGNLIYSNYLQLTYLPNTGELTIFCASIVGSCLGFLWFNAQPAEVFMGDTGSLSLGGVLGIISVITKHEIVLGIVGGLFVIETISVIMQVYYFKATKGKRIFKMAPLHHHFEKSGWTESKVVIRFWIISLIFVLIGLSSLKLR</sequence>
<feature type="chain" id="PRO_0000278066" description="Phospho-N-acetylmuramoyl-pentapeptide-transferase">
    <location>
        <begin position="1"/>
        <end position="361"/>
    </location>
</feature>
<feature type="transmembrane region" description="Helical" evidence="1">
    <location>
        <begin position="28"/>
        <end position="48"/>
    </location>
</feature>
<feature type="transmembrane region" description="Helical" evidence="1">
    <location>
        <begin position="74"/>
        <end position="94"/>
    </location>
</feature>
<feature type="transmembrane region" description="Helical" evidence="1">
    <location>
        <begin position="99"/>
        <end position="119"/>
    </location>
</feature>
<feature type="transmembrane region" description="Helical" evidence="1">
    <location>
        <begin position="135"/>
        <end position="155"/>
    </location>
</feature>
<feature type="transmembrane region" description="Helical" evidence="1">
    <location>
        <begin position="167"/>
        <end position="187"/>
    </location>
</feature>
<feature type="transmembrane region" description="Helical" evidence="1">
    <location>
        <begin position="203"/>
        <end position="223"/>
    </location>
</feature>
<feature type="transmembrane region" description="Helical" evidence="1">
    <location>
        <begin position="236"/>
        <end position="256"/>
    </location>
</feature>
<feature type="transmembrane region" description="Helical" evidence="1">
    <location>
        <begin position="263"/>
        <end position="283"/>
    </location>
</feature>
<feature type="transmembrane region" description="Helical" evidence="1">
    <location>
        <begin position="288"/>
        <end position="308"/>
    </location>
</feature>
<feature type="transmembrane region" description="Helical" evidence="1">
    <location>
        <begin position="338"/>
        <end position="358"/>
    </location>
</feature>
<dbReference type="EC" id="2.7.8.13" evidence="1"/>
<dbReference type="EMBL" id="CP000087">
    <property type="protein sequence ID" value="ABE04935.1"/>
    <property type="molecule type" value="Genomic_DNA"/>
</dbReference>
<dbReference type="RefSeq" id="WP_011477520.1">
    <property type="nucleotide sequence ID" value="NC_007940.1"/>
</dbReference>
<dbReference type="SMR" id="Q1RI79"/>
<dbReference type="KEGG" id="rbe:RBE_0854"/>
<dbReference type="eggNOG" id="COG0472">
    <property type="taxonomic scope" value="Bacteria"/>
</dbReference>
<dbReference type="HOGENOM" id="CLU_023982_0_0_5"/>
<dbReference type="OrthoDB" id="9805475at2"/>
<dbReference type="UniPathway" id="UPA00219"/>
<dbReference type="Proteomes" id="UP000001951">
    <property type="component" value="Chromosome"/>
</dbReference>
<dbReference type="GO" id="GO:0005886">
    <property type="term" value="C:plasma membrane"/>
    <property type="evidence" value="ECO:0007669"/>
    <property type="project" value="UniProtKB-SubCell"/>
</dbReference>
<dbReference type="GO" id="GO:0046872">
    <property type="term" value="F:metal ion binding"/>
    <property type="evidence" value="ECO:0007669"/>
    <property type="project" value="UniProtKB-KW"/>
</dbReference>
<dbReference type="GO" id="GO:0008963">
    <property type="term" value="F:phospho-N-acetylmuramoyl-pentapeptide-transferase activity"/>
    <property type="evidence" value="ECO:0007669"/>
    <property type="project" value="UniProtKB-UniRule"/>
</dbReference>
<dbReference type="GO" id="GO:0051992">
    <property type="term" value="F:UDP-N-acetylmuramoyl-L-alanyl-D-glutamyl-meso-2,6-diaminopimelyl-D-alanyl-D-alanine:undecaprenyl-phosphate transferase activity"/>
    <property type="evidence" value="ECO:0007669"/>
    <property type="project" value="RHEA"/>
</dbReference>
<dbReference type="GO" id="GO:0051301">
    <property type="term" value="P:cell division"/>
    <property type="evidence" value="ECO:0007669"/>
    <property type="project" value="UniProtKB-KW"/>
</dbReference>
<dbReference type="GO" id="GO:0071555">
    <property type="term" value="P:cell wall organization"/>
    <property type="evidence" value="ECO:0007669"/>
    <property type="project" value="UniProtKB-KW"/>
</dbReference>
<dbReference type="GO" id="GO:0009252">
    <property type="term" value="P:peptidoglycan biosynthetic process"/>
    <property type="evidence" value="ECO:0007669"/>
    <property type="project" value="UniProtKB-UniRule"/>
</dbReference>
<dbReference type="GO" id="GO:0008360">
    <property type="term" value="P:regulation of cell shape"/>
    <property type="evidence" value="ECO:0007669"/>
    <property type="project" value="UniProtKB-KW"/>
</dbReference>
<dbReference type="CDD" id="cd06852">
    <property type="entry name" value="GT_MraY"/>
    <property type="match status" value="1"/>
</dbReference>
<dbReference type="HAMAP" id="MF_00038">
    <property type="entry name" value="MraY"/>
    <property type="match status" value="1"/>
</dbReference>
<dbReference type="InterPro" id="IPR000715">
    <property type="entry name" value="Glycosyl_transferase_4"/>
</dbReference>
<dbReference type="InterPro" id="IPR003524">
    <property type="entry name" value="PNAcMuramoyl-5peptid_Trfase"/>
</dbReference>
<dbReference type="InterPro" id="IPR018480">
    <property type="entry name" value="PNAcMuramoyl-5peptid_Trfase_CS"/>
</dbReference>
<dbReference type="NCBIfam" id="TIGR00445">
    <property type="entry name" value="mraY"/>
    <property type="match status" value="1"/>
</dbReference>
<dbReference type="PANTHER" id="PTHR22926">
    <property type="entry name" value="PHOSPHO-N-ACETYLMURAMOYL-PENTAPEPTIDE-TRANSFERASE"/>
    <property type="match status" value="1"/>
</dbReference>
<dbReference type="PANTHER" id="PTHR22926:SF5">
    <property type="entry name" value="PHOSPHO-N-ACETYLMURAMOYL-PENTAPEPTIDE-TRANSFERASE HOMOLOG"/>
    <property type="match status" value="1"/>
</dbReference>
<dbReference type="Pfam" id="PF00953">
    <property type="entry name" value="Glycos_transf_4"/>
    <property type="match status" value="1"/>
</dbReference>
<dbReference type="Pfam" id="PF10555">
    <property type="entry name" value="MraY_sig1"/>
    <property type="match status" value="1"/>
</dbReference>
<dbReference type="PROSITE" id="PS01347">
    <property type="entry name" value="MRAY_1"/>
    <property type="match status" value="1"/>
</dbReference>
<dbReference type="PROSITE" id="PS01348">
    <property type="entry name" value="MRAY_2"/>
    <property type="match status" value="1"/>
</dbReference>
<name>MRAY_RICBR</name>
<evidence type="ECO:0000255" key="1">
    <source>
        <dbReference type="HAMAP-Rule" id="MF_00038"/>
    </source>
</evidence>
<protein>
    <recommendedName>
        <fullName evidence="1">Phospho-N-acetylmuramoyl-pentapeptide-transferase</fullName>
        <ecNumber evidence="1">2.7.8.13</ecNumber>
    </recommendedName>
    <alternativeName>
        <fullName evidence="1">UDP-MurNAc-pentapeptide phosphotransferase</fullName>
    </alternativeName>
</protein>
<keyword id="KW-0131">Cell cycle</keyword>
<keyword id="KW-0132">Cell division</keyword>
<keyword id="KW-0997">Cell inner membrane</keyword>
<keyword id="KW-1003">Cell membrane</keyword>
<keyword id="KW-0133">Cell shape</keyword>
<keyword id="KW-0961">Cell wall biogenesis/degradation</keyword>
<keyword id="KW-0460">Magnesium</keyword>
<keyword id="KW-0472">Membrane</keyword>
<keyword id="KW-0479">Metal-binding</keyword>
<keyword id="KW-0573">Peptidoglycan synthesis</keyword>
<keyword id="KW-0808">Transferase</keyword>
<keyword id="KW-0812">Transmembrane</keyword>
<keyword id="KW-1133">Transmembrane helix</keyword>
<comment type="function">
    <text evidence="1">Catalyzes the initial step of the lipid cycle reactions in the biosynthesis of the cell wall peptidoglycan: transfers peptidoglycan precursor phospho-MurNAc-pentapeptide from UDP-MurNAc-pentapeptide onto the lipid carrier undecaprenyl phosphate, yielding undecaprenyl-pyrophosphoryl-MurNAc-pentapeptide, known as lipid I.</text>
</comment>
<comment type="catalytic activity">
    <reaction evidence="1">
        <text>UDP-N-acetyl-alpha-D-muramoyl-L-alanyl-gamma-D-glutamyl-meso-2,6-diaminopimeloyl-D-alanyl-D-alanine + di-trans,octa-cis-undecaprenyl phosphate = di-trans,octa-cis-undecaprenyl diphospho-N-acetyl-alpha-D-muramoyl-L-alanyl-D-glutamyl-meso-2,6-diaminopimeloyl-D-alanyl-D-alanine + UMP</text>
        <dbReference type="Rhea" id="RHEA:28386"/>
        <dbReference type="ChEBI" id="CHEBI:57865"/>
        <dbReference type="ChEBI" id="CHEBI:60392"/>
        <dbReference type="ChEBI" id="CHEBI:61386"/>
        <dbReference type="ChEBI" id="CHEBI:61387"/>
        <dbReference type="EC" id="2.7.8.13"/>
    </reaction>
</comment>
<comment type="cofactor">
    <cofactor evidence="1">
        <name>Mg(2+)</name>
        <dbReference type="ChEBI" id="CHEBI:18420"/>
    </cofactor>
</comment>
<comment type="pathway">
    <text evidence="1">Cell wall biogenesis; peptidoglycan biosynthesis.</text>
</comment>
<comment type="subcellular location">
    <subcellularLocation>
        <location evidence="1">Cell inner membrane</location>
        <topology evidence="1">Multi-pass membrane protein</topology>
    </subcellularLocation>
</comment>
<comment type="similarity">
    <text evidence="1">Belongs to the glycosyltransferase 4 family. MraY subfamily.</text>
</comment>
<accession>Q1RI79</accession>